<evidence type="ECO:0000269" key="1">
    <source>
    </source>
</evidence>
<evidence type="ECO:0000303" key="2">
    <source>
    </source>
</evidence>
<evidence type="ECO:0000305" key="3"/>
<evidence type="ECO:0000312" key="4">
    <source>
        <dbReference type="EMBL" id="AAC75966.1"/>
    </source>
</evidence>
<keyword id="KW-0456">Lyase</keyword>
<keyword id="KW-1185">Reference proteome</keyword>
<proteinExistence type="evidence at protein level"/>
<sequence>MATLTEDDVLEQLDAQDNLFSFMKTAHTILLQGIRQFLPSLFVDNDEEIVEYAVKPLLAQSGPLDDIDVALRLIYALGKMDKWLYADITHFSQFWHYLNEQDETPGFADDMTWDFISNVNSITRNAMLYDALKAMKFADFSVWSEARFSGMVKTALTLAVTTTLKELTP</sequence>
<organism>
    <name type="scientific">Escherichia coli (strain K12)</name>
    <dbReference type="NCBI Taxonomy" id="83333"/>
    <lineage>
        <taxon>Bacteria</taxon>
        <taxon>Pseudomonadati</taxon>
        <taxon>Pseudomonadota</taxon>
        <taxon>Gammaproteobacteria</taxon>
        <taxon>Enterobacterales</taxon>
        <taxon>Enterobacteriaceae</taxon>
        <taxon>Escherichia</taxon>
    </lineage>
</organism>
<comment type="function">
    <text evidence="1">In vitro catalyzes the addition of water to fumarate, forming malate. Cannot catalyze the reverse reaction. Cannot use the cis-isomer maleate as substrate.</text>
</comment>
<comment type="catalytic activity">
    <reaction evidence="1">
        <text>(S)-malate = fumarate + H2O</text>
        <dbReference type="Rhea" id="RHEA:12460"/>
        <dbReference type="ChEBI" id="CHEBI:15377"/>
        <dbReference type="ChEBI" id="CHEBI:15589"/>
        <dbReference type="ChEBI" id="CHEBI:29806"/>
        <dbReference type="EC" id="4.2.1.2"/>
    </reaction>
</comment>
<comment type="similarity">
    <text evidence="3">Belongs to the MtlR/FumE family.</text>
</comment>
<comment type="sequence caution" evidence="3">
    <conflict type="erroneous initiation">
        <sequence resource="EMBL-CDS" id="CAA32601"/>
    </conflict>
    <text>Truncated N-terminus.</text>
</comment>
<dbReference type="EC" id="4.2.1.2" evidence="1"/>
<dbReference type="EMBL" id="U28377">
    <property type="protein sequence ID" value="AAA69096.1"/>
    <property type="molecule type" value="Genomic_DNA"/>
</dbReference>
<dbReference type="EMBL" id="U00096">
    <property type="protein sequence ID" value="AAC75966.1"/>
    <property type="molecule type" value="Genomic_DNA"/>
</dbReference>
<dbReference type="EMBL" id="AP009048">
    <property type="protein sequence ID" value="BAE76993.1"/>
    <property type="molecule type" value="Genomic_DNA"/>
</dbReference>
<dbReference type="EMBL" id="X14436">
    <property type="protein sequence ID" value="CAA32601.1"/>
    <property type="status" value="ALT_INIT"/>
    <property type="molecule type" value="Genomic_DNA"/>
</dbReference>
<dbReference type="PIR" id="H65077">
    <property type="entry name" value="QQEC2B"/>
</dbReference>
<dbReference type="RefSeq" id="NP_417404.1">
    <property type="nucleotide sequence ID" value="NC_000913.3"/>
</dbReference>
<dbReference type="RefSeq" id="WP_000224147.1">
    <property type="nucleotide sequence ID" value="NZ_SSZK01000003.1"/>
</dbReference>
<dbReference type="SMR" id="P11663"/>
<dbReference type="BioGRID" id="4262333">
    <property type="interactions" value="188"/>
</dbReference>
<dbReference type="FunCoup" id="P11663">
    <property type="interactions" value="96"/>
</dbReference>
<dbReference type="IntAct" id="P11663">
    <property type="interactions" value="5"/>
</dbReference>
<dbReference type="STRING" id="511145.b2929"/>
<dbReference type="PaxDb" id="511145-b2929"/>
<dbReference type="EnsemblBacteria" id="AAC75966">
    <property type="protein sequence ID" value="AAC75966"/>
    <property type="gene ID" value="b2929"/>
</dbReference>
<dbReference type="GeneID" id="946861"/>
<dbReference type="KEGG" id="ecj:JW2896"/>
<dbReference type="KEGG" id="eco:b2929"/>
<dbReference type="KEGG" id="ecoc:C3026_16045"/>
<dbReference type="PATRIC" id="fig|1411691.4.peg.3803"/>
<dbReference type="EchoBASE" id="EB1151"/>
<dbReference type="eggNOG" id="COG3722">
    <property type="taxonomic scope" value="Bacteria"/>
</dbReference>
<dbReference type="HOGENOM" id="CLU_132701_0_0_6"/>
<dbReference type="InParanoid" id="P11663"/>
<dbReference type="OMA" id="VSKLMFA"/>
<dbReference type="OrthoDB" id="6496300at2"/>
<dbReference type="PhylomeDB" id="P11663"/>
<dbReference type="BioCyc" id="EcoCyc:EG11162-MONOMER"/>
<dbReference type="BioCyc" id="MetaCyc:EG11162-MONOMER"/>
<dbReference type="PRO" id="PR:P11663"/>
<dbReference type="Proteomes" id="UP000000625">
    <property type="component" value="Chromosome"/>
</dbReference>
<dbReference type="GO" id="GO:0004333">
    <property type="term" value="F:fumarate hydratase activity"/>
    <property type="evidence" value="ECO:0000314"/>
    <property type="project" value="EcoCyc"/>
</dbReference>
<dbReference type="FunFam" id="1.20.120.330:FF:000013">
    <property type="entry name" value="DNA-binding transcriptional regulator"/>
    <property type="match status" value="1"/>
</dbReference>
<dbReference type="Gene3D" id="1.20.120.330">
    <property type="entry name" value="Nucleotidyltransferases domain 2"/>
    <property type="match status" value="1"/>
</dbReference>
<dbReference type="InterPro" id="IPR007761">
    <property type="entry name" value="MtlR-like"/>
</dbReference>
<dbReference type="InterPro" id="IPR038026">
    <property type="entry name" value="MtlR-like_sf"/>
</dbReference>
<dbReference type="NCBIfam" id="NF007455">
    <property type="entry name" value="PRK10022.1"/>
    <property type="match status" value="1"/>
</dbReference>
<dbReference type="PANTHER" id="PTHR37941">
    <property type="entry name" value="FUMARASE E-RELATED"/>
    <property type="match status" value="1"/>
</dbReference>
<dbReference type="PANTHER" id="PTHR37941:SF1">
    <property type="entry name" value="FUMARASE E-RELATED"/>
    <property type="match status" value="1"/>
</dbReference>
<dbReference type="Pfam" id="PF05068">
    <property type="entry name" value="MtlR"/>
    <property type="match status" value="1"/>
</dbReference>
<dbReference type="SUPFAM" id="SSF158668">
    <property type="entry name" value="MtlR-like"/>
    <property type="match status" value="1"/>
</dbReference>
<reference key="1">
    <citation type="journal article" date="1997" name="Science">
        <title>The complete genome sequence of Escherichia coli K-12.</title>
        <authorList>
            <person name="Blattner F.R."/>
            <person name="Plunkett G. III"/>
            <person name="Bloch C.A."/>
            <person name="Perna N.T."/>
            <person name="Burland V."/>
            <person name="Riley M."/>
            <person name="Collado-Vides J."/>
            <person name="Glasner J.D."/>
            <person name="Rode C.K."/>
            <person name="Mayhew G.F."/>
            <person name="Gregor J."/>
            <person name="Davis N.W."/>
            <person name="Kirkpatrick H.A."/>
            <person name="Goeden M.A."/>
            <person name="Rose D.J."/>
            <person name="Mau B."/>
            <person name="Shao Y."/>
        </authorList>
    </citation>
    <scope>NUCLEOTIDE SEQUENCE [LARGE SCALE GENOMIC DNA]</scope>
    <source>
        <strain>K12 / MG1655 / ATCC 47076</strain>
    </source>
</reference>
<reference key="2">
    <citation type="journal article" date="2006" name="Mol. Syst. Biol.">
        <title>Highly accurate genome sequences of Escherichia coli K-12 strains MG1655 and W3110.</title>
        <authorList>
            <person name="Hayashi K."/>
            <person name="Morooka N."/>
            <person name="Yamamoto Y."/>
            <person name="Fujita K."/>
            <person name="Isono K."/>
            <person name="Choi S."/>
            <person name="Ohtsubo E."/>
            <person name="Baba T."/>
            <person name="Wanner B.L."/>
            <person name="Mori H."/>
            <person name="Horiuchi T."/>
        </authorList>
    </citation>
    <scope>NUCLEOTIDE SEQUENCE [LARGE SCALE GENOMIC DNA]</scope>
    <source>
        <strain>K12 / W3110 / ATCC 27325 / DSM 5911</strain>
    </source>
</reference>
<reference key="3">
    <citation type="journal article" date="1989" name="Mol. Microbiol.">
        <title>Identification, molecular cloning and sequence analysis of a gene cluster encoding the class II fructose 1,6-bisphosphate aldolase, 3-phosphoglycerate kinase and a putative second glyceraldehyde 3-phosphate dehydrogenase of Escherichia coli.</title>
        <authorList>
            <person name="Alefounder P.R."/>
            <person name="Perham R.N."/>
        </authorList>
    </citation>
    <scope>NUCLEOTIDE SEQUENCE [GENOMIC DNA] OF 1-155</scope>
    <source>
        <strain>K12 / CS520</strain>
    </source>
</reference>
<reference key="4">
    <citation type="journal article" date="2017" name="Nat. Methods">
        <title>Nontargeted in vitro metabolomics for high-throughput identification of novel enzymes in Escherichia coli.</title>
        <authorList>
            <person name="Sevin D.C."/>
            <person name="Fuhrer T."/>
            <person name="Zamboni N."/>
            <person name="Sauer U."/>
        </authorList>
    </citation>
    <scope>FUNCTION</scope>
    <scope>CATALYTIC ACTIVITY</scope>
    <source>
        <strain>K12</strain>
    </source>
</reference>
<feature type="chain" id="PRO_0000169363" description="Fumarase E">
    <location>
        <begin position="1"/>
        <end position="169"/>
    </location>
</feature>
<name>FUME_ECOLI</name>
<gene>
    <name evidence="2" type="primary">fumE</name>
    <name evidence="4" type="synonym">yggD</name>
    <name type="ordered locus">b2929</name>
    <name type="ordered locus">JW2896</name>
</gene>
<accession>P11663</accession>
<accession>Q2M9R3</accession>
<protein>
    <recommendedName>
        <fullName evidence="2">Fumarase E</fullName>
        <ecNumber evidence="1">4.2.1.2</ecNumber>
    </recommendedName>
</protein>